<protein>
    <recommendedName>
        <fullName evidence="3">Secreted RxLR effector protein 150</fullName>
    </recommendedName>
</protein>
<keyword id="KW-1035">Host cytoplasm</keyword>
<keyword id="KW-1048">Host nucleus</keyword>
<keyword id="KW-0964">Secreted</keyword>
<keyword id="KW-0732">Signal</keyword>
<keyword id="KW-0843">Virulence</keyword>
<comment type="function">
    <text evidence="2">Secreted effector that partially suppresses the host cell death induced by cell death-inducing proteins.</text>
</comment>
<comment type="subcellular location">
    <subcellularLocation>
        <location evidence="2">Secreted</location>
    </subcellularLocation>
    <subcellularLocation>
        <location evidence="2">Host nucleus</location>
    </subcellularLocation>
    <subcellularLocation>
        <location evidence="2">Host cytoplasm</location>
    </subcellularLocation>
</comment>
<comment type="domain">
    <text evidence="5">The RxLR-dEER motif acts to carry the protein into the host cell cytoplasm through binding to cell surface phosphatidylinositol-3-phosphate.</text>
</comment>
<comment type="similarity">
    <text evidence="4">Belongs to the RxLR effector family.</text>
</comment>
<accession>P0CV64</accession>
<reference key="1">
    <citation type="journal article" date="2018" name="Front. Plant Sci.">
        <title>In planta functional analysis and subcellular localization of the oomycete pathogen Plasmopara viticola candidate RXLR effector repertoire.</title>
        <authorList>
            <person name="Liu Y."/>
            <person name="Lan X."/>
            <person name="Song S."/>
            <person name="Yin L."/>
            <person name="Dry I.B."/>
            <person name="Qu J."/>
            <person name="Xiang J."/>
            <person name="Lu J."/>
        </authorList>
    </citation>
    <scope>NUCLEOTIDE SEQUENCE [MRNA]</scope>
    <scope>DOMAIN</scope>
    <scope>FUNCTION</scope>
    <scope>SUBCELLULAR LOCATION</scope>
</reference>
<name>RL150_PLAVT</name>
<sequence length="276" mass="31897">MRNIAFLIGLFFIGYSSCVLHATPTRASLVEKSDAESTHVEQWDSNGKRTLQADDRERILAEERGMEQTLLPAAEAIGKTKVSEKAVSRASLGSKLNPMTWPKRILYKIKLWYARFRQNLLKRATMDEESIDRSMMSGLTPFALKKIKNDIFHYSSSVPRDAIKIEKDYNSYVDQFFGQFNGLFKDPPVFEMAKWKKLEADMTSTEQIVERTALNKVSQYIDKGFSNEKLISLDVSPFVYMRLLEKRGVFKDVENNIDKIEHLKVYVKAYEEHLMV</sequence>
<dbReference type="GO" id="GO:0005576">
    <property type="term" value="C:extracellular region"/>
    <property type="evidence" value="ECO:0007669"/>
    <property type="project" value="UniProtKB-SubCell"/>
</dbReference>
<dbReference type="GO" id="GO:0030430">
    <property type="term" value="C:host cell cytoplasm"/>
    <property type="evidence" value="ECO:0007669"/>
    <property type="project" value="UniProtKB-SubCell"/>
</dbReference>
<dbReference type="GO" id="GO:0042025">
    <property type="term" value="C:host cell nucleus"/>
    <property type="evidence" value="ECO:0007669"/>
    <property type="project" value="UniProtKB-SubCell"/>
</dbReference>
<gene>
    <name evidence="3" type="primary">RXLR150</name>
</gene>
<organism>
    <name type="scientific">Plasmopara viticola</name>
    <name type="common">Downy mildew of grapevine</name>
    <name type="synonym">Botrytis viticola</name>
    <dbReference type="NCBI Taxonomy" id="143451"/>
    <lineage>
        <taxon>Eukaryota</taxon>
        <taxon>Sar</taxon>
        <taxon>Stramenopiles</taxon>
        <taxon>Oomycota</taxon>
        <taxon>Peronosporales</taxon>
        <taxon>Peronosporaceae</taxon>
        <taxon>Plasmopara</taxon>
    </lineage>
</organism>
<evidence type="ECO:0000255" key="1"/>
<evidence type="ECO:0000269" key="2">
    <source>
    </source>
</evidence>
<evidence type="ECO:0000303" key="3">
    <source>
    </source>
</evidence>
<evidence type="ECO:0000305" key="4"/>
<evidence type="ECO:0000305" key="5">
    <source>
    </source>
</evidence>
<proteinExistence type="evidence at transcript level"/>
<feature type="signal peptide" evidence="1">
    <location>
        <begin position="1"/>
        <end position="18"/>
    </location>
</feature>
<feature type="chain" id="PRO_0000447974" description="Secreted RxLR effector protein 150">
    <location>
        <begin position="19"/>
        <end position="276"/>
    </location>
</feature>
<feature type="short sequence motif" description="RxLR-dEER" evidence="5">
    <location>
        <begin position="49"/>
        <end position="64"/>
    </location>
</feature>